<proteinExistence type="evidence at protein level"/>
<gene>
    <name evidence="5" type="primary">TMK</name>
    <name evidence="7" type="synonym">TMPK</name>
    <name evidence="13" type="ORF">PF3D7_1251300</name>
</gene>
<sequence length="210" mass="24691">MTDDKKKGKFIVFEGLDRSGKSTQSKLLVEYLKNNNVEVKHLYFPNRETGIGQIISKYLKMENSMSNETIHLLFSANRWEHMNEIKSLLLKGIWVVCDRYAYSGVAYSSGALNLNKTWCMNPDQGLIKPDVVFYLNVPPNYAQNRSDYGEEIYEKVETQKKIYETYKHFAHEDYWINIDATRKIEDIHNDIVKEVTKIKVEPEEFNFLWS</sequence>
<name>KTHY_PLAF7</name>
<keyword id="KW-0002">3D-structure</keyword>
<keyword id="KW-0067">ATP-binding</keyword>
<keyword id="KW-0418">Kinase</keyword>
<keyword id="KW-0545">Nucleotide biosynthesis</keyword>
<keyword id="KW-0547">Nucleotide-binding</keyword>
<keyword id="KW-1185">Reference proteome</keyword>
<keyword id="KW-0808">Transferase</keyword>
<evidence type="ECO:0000269" key="1">
    <source>
    </source>
</evidence>
<evidence type="ECO:0000269" key="2">
    <source>
    </source>
</evidence>
<evidence type="ECO:0000269" key="3">
    <source>
    </source>
</evidence>
<evidence type="ECO:0000269" key="4">
    <source>
    </source>
</evidence>
<evidence type="ECO:0000303" key="5">
    <source>
    </source>
</evidence>
<evidence type="ECO:0000303" key="6">
    <source>
    </source>
</evidence>
<evidence type="ECO:0000303" key="7">
    <source>
    </source>
</evidence>
<evidence type="ECO:0000305" key="8"/>
<evidence type="ECO:0000305" key="9">
    <source>
    </source>
</evidence>
<evidence type="ECO:0000305" key="10">
    <source>
    </source>
</evidence>
<evidence type="ECO:0000305" key="11">
    <source>
    </source>
</evidence>
<evidence type="ECO:0000305" key="12">
    <source>
    </source>
</evidence>
<evidence type="ECO:0000312" key="13">
    <source>
        <dbReference type="EMBL" id="CZT99668.1"/>
    </source>
</evidence>
<evidence type="ECO:0000312" key="14">
    <source>
        <dbReference type="Proteomes" id="UP000001450"/>
    </source>
</evidence>
<evidence type="ECO:0007744" key="15">
    <source>
        <dbReference type="PDB" id="2WWF"/>
    </source>
</evidence>
<evidence type="ECO:0007744" key="16">
    <source>
        <dbReference type="PDB" id="2WWG"/>
    </source>
</evidence>
<evidence type="ECO:0007744" key="17">
    <source>
        <dbReference type="PDB" id="2WWH"/>
    </source>
</evidence>
<evidence type="ECO:0007744" key="18">
    <source>
        <dbReference type="PDB" id="2WWI"/>
    </source>
</evidence>
<evidence type="ECO:0007744" key="19">
    <source>
        <dbReference type="PDB" id="2YOF"/>
    </source>
</evidence>
<evidence type="ECO:0007744" key="20">
    <source>
        <dbReference type="PDB" id="2YOG"/>
    </source>
</evidence>
<evidence type="ECO:0007744" key="21">
    <source>
        <dbReference type="PDB" id="2YOH"/>
    </source>
</evidence>
<evidence type="ECO:0007829" key="22">
    <source>
        <dbReference type="PDB" id="2WWF"/>
    </source>
</evidence>
<evidence type="ECO:0007829" key="23">
    <source>
        <dbReference type="PDB" id="2YOG"/>
    </source>
</evidence>
<comment type="function">
    <text evidence="1 2 3 4">Catalyzes the phosphorylation of thymidine monophosphate (dTMP) to thymidine diphosphate (dTDP), the immediate precursor for the DNA building block dTTP (PubMed:18477629, PubMed:19126267, PubMed:20353400, PubMed:31934749). Can also phosphorylate dGMP and to a lesser extent GMP, dUMP and dIMP (PubMed:18477629, PubMed:19126267, PubMed:20353400, PubMed:31934749). Can use either ATP or dATP as phosphate donors in presence of Mg(2+) (PubMed:18477629).</text>
</comment>
<comment type="catalytic activity">
    <reaction evidence="1 2 3 4">
        <text>dTMP + ATP = dTDP + ADP</text>
        <dbReference type="Rhea" id="RHEA:13517"/>
        <dbReference type="ChEBI" id="CHEBI:30616"/>
        <dbReference type="ChEBI" id="CHEBI:58369"/>
        <dbReference type="ChEBI" id="CHEBI:63528"/>
        <dbReference type="ChEBI" id="CHEBI:456216"/>
        <dbReference type="EC" id="2.7.4.9"/>
    </reaction>
</comment>
<comment type="catalytic activity">
    <reaction evidence="1 2 3 4">
        <text>dGMP + ATP = dGDP + ADP</text>
        <dbReference type="Rhea" id="RHEA:12697"/>
        <dbReference type="ChEBI" id="CHEBI:30616"/>
        <dbReference type="ChEBI" id="CHEBI:57673"/>
        <dbReference type="ChEBI" id="CHEBI:58595"/>
        <dbReference type="ChEBI" id="CHEBI:456216"/>
        <dbReference type="EC" id="2.7.4.8"/>
    </reaction>
</comment>
<comment type="activity regulation">
    <text evidence="2">Inhibited by deoxyguanosine (dG), deoxythymidine (dT) and azidothymidine (AZT).</text>
</comment>
<comment type="biophysicochemical properties">
    <kinetics>
        <KM evidence="1 2">22 uM for dTMP (at pH 7.2 and 30 degrees Celsius)</KM>
        <KM evidence="3">10.7 uM for dTMP (at pH 7.4)</KM>
        <KM evidence="4">25.5 uM for dTMP</KM>
        <KM evidence="1 2">30.7 uM for dGMP (at pH 7.2 and 30 degrees Celsius)</KM>
        <KM evidence="3">12.6 uM for dGMP (at pH 7.4)</KM>
        <KM evidence="4">36.2 uM for dGMP</KM>
        <KM evidence="1">780 uM for dUMP (at pH 7.2 and 30 degrees Celsius)</KM>
        <KM evidence="3">155 uM for dUMP (at pH 7.4)</KM>
        <KM evidence="1">577 uM for dIMP (at pH 7.2 and 30 degrees Celsius)</KM>
        <KM evidence="3">349 uM for dIMP (at pH 7.4)</KM>
        <KM evidence="3">253 uM for GMP (at pH 7.4 and with dTMP as cosubstrate)</KM>
        <KM evidence="3">78.6 uM for ATP (at pH 7.4)</KM>
        <KM evidence="4">100.8 uM for ATP</KM>
        <text evidence="1 2 3 4">kcat is 3.4 sec(-1) with dTMP as substrate (at pH 7.2 and 30 degrees Celsius) (PubMed:18477629). kcat is 3.2 sec(-1) with dTMP as substrate (at pH 7.2 and 30 degrees Celsius) (PubMed:19126267). kcat is 3.1 sec(-1) with dTMP as substrate (PubMed:31934749). kcat is 4.9 sec(-1) with dTMP as substrate (at pH 7.4) (PubMed:20353400). kcat is 2.9 sec(-1) with dGMP as substrate (at pH 7.2 and 30 degrees Celsius) (PubMed:18477629). kcat is 2.7 sec(-1) with dGMP as substrate (at pH 7.2 and 30 degrees Celsius) (PubMed:19126267). kcat is 2.4 sec(-1) with dGMP as substrate (PubMed:31934749). kcat is 4.7 sec(-1) with dGMP as substrate (at pH 7.4) (PubMed:20353400). kcat is 4.1 sec(-1) with dUMP as substrate (at pH 7.2 and 30 degrees Celsius) (PubMed:18477629). kcat is 6.2 sec(-1) with dUMP as substrate (at pH 7.4) (PubMed:20353400). kcat is 0.44 sec(-1) with dIMP as substrate (at pH 7.2 and 30 degrees Celsius) (PubMed:18477629). kcat is 3.0 sec(-1) with dIMP as substrate (at pH 7.4) (PubMed:20353400). kcat is 0.3 sec(-1) with GMP as substrate (at pH 7.4) (PubMed:20353400). kcat is 3.30 sec(-1) with ATP as substrate (PubMed:31934749).</text>
    </kinetics>
    <phDependence>
        <text evidence="1">Optimum pH is 7-9.</text>
    </phDependence>
</comment>
<comment type="pathway">
    <text evidence="9 10 11 12">Pyrimidine metabolism; dTTP biosynthesis.</text>
</comment>
<comment type="subunit">
    <text evidence="1 2 4">Homodimer (PubMed:18477629, PubMed:19126267, PubMed:31934749). Binds two dTMP molecules per dimer (PubMed:31934749). Binds only one dTGP molecule per dimer (PubMed:31934749).</text>
</comment>
<comment type="biotechnology">
    <text evidence="3">Phosphorylates AZT monophosphate (AZT-MP) more efficiently than human DTYMK/TMPK. The conversion of AZT MP into AZT diphosphate (AZT-DP) by the human enzyme is a crucial step in the production of the active anti-HIV drug AZT triphosphate (AZT-TP).</text>
</comment>
<comment type="similarity">
    <text evidence="8">Belongs to the thymidylate kinase family.</text>
</comment>
<accession>Q8I4S1</accession>
<dbReference type="EC" id="2.7.4.8" evidence="1 2 3 4"/>
<dbReference type="EC" id="2.7.4.9" evidence="1 2 3 4"/>
<dbReference type="EMBL" id="LN999947">
    <property type="protein sequence ID" value="CZT99668.1"/>
    <property type="molecule type" value="Genomic_DNA"/>
</dbReference>
<dbReference type="RefSeq" id="XP_001350897.1">
    <property type="nucleotide sequence ID" value="XM_001350861.1"/>
</dbReference>
<dbReference type="PDB" id="2WWF">
    <property type="method" value="X-ray"/>
    <property type="resolution" value="1.89 A"/>
    <property type="chains" value="A/B/C=1-210"/>
</dbReference>
<dbReference type="PDB" id="2WWG">
    <property type="method" value="X-ray"/>
    <property type="resolution" value="2.40 A"/>
    <property type="chains" value="A/B/C=1-210"/>
</dbReference>
<dbReference type="PDB" id="2WWH">
    <property type="method" value="X-ray"/>
    <property type="resolution" value="2.70 A"/>
    <property type="chains" value="A/B/C=1-210"/>
</dbReference>
<dbReference type="PDB" id="2WWI">
    <property type="method" value="X-ray"/>
    <property type="resolution" value="2.99 A"/>
    <property type="chains" value="A/B/C=1-210"/>
</dbReference>
<dbReference type="PDB" id="2YOF">
    <property type="method" value="X-ray"/>
    <property type="resolution" value="1.82 A"/>
    <property type="chains" value="A/B/C=1-210"/>
</dbReference>
<dbReference type="PDB" id="2YOG">
    <property type="method" value="X-ray"/>
    <property type="resolution" value="1.50 A"/>
    <property type="chains" value="A/B=1-210"/>
</dbReference>
<dbReference type="PDB" id="2YOH">
    <property type="method" value="X-ray"/>
    <property type="resolution" value="1.60 A"/>
    <property type="chains" value="A/B=1-210"/>
</dbReference>
<dbReference type="PDBsum" id="2WWF"/>
<dbReference type="PDBsum" id="2WWG"/>
<dbReference type="PDBsum" id="2WWH"/>
<dbReference type="PDBsum" id="2WWI"/>
<dbReference type="PDBsum" id="2YOF"/>
<dbReference type="PDBsum" id="2YOG"/>
<dbReference type="PDBsum" id="2YOH"/>
<dbReference type="SMR" id="Q8I4S1"/>
<dbReference type="FunCoup" id="Q8I4S1">
    <property type="interactions" value="385"/>
</dbReference>
<dbReference type="STRING" id="36329.Q8I4S1"/>
<dbReference type="BindingDB" id="Q8I4S1"/>
<dbReference type="ChEMBL" id="CHEMBL2176852"/>
<dbReference type="SwissPalm" id="Q8I4S1"/>
<dbReference type="PaxDb" id="5833-PFL2465c"/>
<dbReference type="EnsemblProtists" id="CZT99668">
    <property type="protein sequence ID" value="CZT99668"/>
    <property type="gene ID" value="PF3D7_1251300"/>
</dbReference>
<dbReference type="GeneID" id="811545"/>
<dbReference type="KEGG" id="pfa:PF3D7_1251300"/>
<dbReference type="VEuPathDB" id="PlasmoDB:PF3D7_1251300"/>
<dbReference type="HOGENOM" id="CLU_049131_3_2_1"/>
<dbReference type="InParanoid" id="Q8I4S1"/>
<dbReference type="OMA" id="YWHQFDA"/>
<dbReference type="OrthoDB" id="425602at2759"/>
<dbReference type="PhylomeDB" id="Q8I4S1"/>
<dbReference type="BRENDA" id="2.7.4.9">
    <property type="organism ID" value="4889"/>
</dbReference>
<dbReference type="Reactome" id="R-PFA-499943">
    <property type="pathway name" value="Interconversion of nucleotide di- and triphosphates"/>
</dbReference>
<dbReference type="UniPathway" id="UPA00575"/>
<dbReference type="EvolutionaryTrace" id="Q8I4S1"/>
<dbReference type="Proteomes" id="UP000001450">
    <property type="component" value="Chromosome 12"/>
</dbReference>
<dbReference type="GO" id="GO:0005737">
    <property type="term" value="C:cytoplasm"/>
    <property type="evidence" value="ECO:0000318"/>
    <property type="project" value="GO_Central"/>
</dbReference>
<dbReference type="GO" id="GO:0005739">
    <property type="term" value="C:mitochondrion"/>
    <property type="evidence" value="ECO:0000318"/>
    <property type="project" value="GO_Central"/>
</dbReference>
<dbReference type="GO" id="GO:0005634">
    <property type="term" value="C:nucleus"/>
    <property type="evidence" value="ECO:0000318"/>
    <property type="project" value="GO_Central"/>
</dbReference>
<dbReference type="GO" id="GO:0005524">
    <property type="term" value="F:ATP binding"/>
    <property type="evidence" value="ECO:0007669"/>
    <property type="project" value="UniProtKB-KW"/>
</dbReference>
<dbReference type="GO" id="GO:0050316">
    <property type="term" value="F:dGMP kinase activity"/>
    <property type="evidence" value="ECO:0007669"/>
    <property type="project" value="RHEA"/>
</dbReference>
<dbReference type="GO" id="GO:0004798">
    <property type="term" value="F:dTMP kinase activity"/>
    <property type="evidence" value="ECO:0000314"/>
    <property type="project" value="UniProtKB"/>
</dbReference>
<dbReference type="GO" id="GO:0004385">
    <property type="term" value="F:guanylate kinase activity"/>
    <property type="evidence" value="ECO:0000314"/>
    <property type="project" value="UniProtKB"/>
</dbReference>
<dbReference type="GO" id="GO:0004550">
    <property type="term" value="F:nucleoside diphosphate kinase activity"/>
    <property type="evidence" value="ECO:0000318"/>
    <property type="project" value="GO_Central"/>
</dbReference>
<dbReference type="GO" id="GO:0006233">
    <property type="term" value="P:dTDP biosynthetic process"/>
    <property type="evidence" value="ECO:0000314"/>
    <property type="project" value="UniProtKB"/>
</dbReference>
<dbReference type="GO" id="GO:0006235">
    <property type="term" value="P:dTTP biosynthetic process"/>
    <property type="evidence" value="ECO:0000314"/>
    <property type="project" value="GeneDB"/>
</dbReference>
<dbReference type="GO" id="GO:0006227">
    <property type="term" value="P:dUDP biosynthetic process"/>
    <property type="evidence" value="ECO:0000314"/>
    <property type="project" value="GeneDB"/>
</dbReference>
<dbReference type="GO" id="GO:0006177">
    <property type="term" value="P:GMP biosynthetic process"/>
    <property type="evidence" value="ECO:0000314"/>
    <property type="project" value="UniProtKB"/>
</dbReference>
<dbReference type="CDD" id="cd01672">
    <property type="entry name" value="TMPK"/>
    <property type="match status" value="1"/>
</dbReference>
<dbReference type="FunFam" id="3.40.50.300:FF:001633">
    <property type="entry name" value="Thymidylate kinase"/>
    <property type="match status" value="1"/>
</dbReference>
<dbReference type="Gene3D" id="3.40.50.300">
    <property type="entry name" value="P-loop containing nucleotide triphosphate hydrolases"/>
    <property type="match status" value="1"/>
</dbReference>
<dbReference type="HAMAP" id="MF_00165">
    <property type="entry name" value="Thymidylate_kinase"/>
    <property type="match status" value="1"/>
</dbReference>
<dbReference type="InterPro" id="IPR027417">
    <property type="entry name" value="P-loop_NTPase"/>
</dbReference>
<dbReference type="InterPro" id="IPR039430">
    <property type="entry name" value="Thymidylate_kin-like_dom"/>
</dbReference>
<dbReference type="InterPro" id="IPR018095">
    <property type="entry name" value="Thymidylate_kin_CS"/>
</dbReference>
<dbReference type="InterPro" id="IPR018094">
    <property type="entry name" value="Thymidylate_kinase"/>
</dbReference>
<dbReference type="NCBIfam" id="TIGR00041">
    <property type="entry name" value="DTMP_kinase"/>
    <property type="match status" value="1"/>
</dbReference>
<dbReference type="PANTHER" id="PTHR10344">
    <property type="entry name" value="THYMIDYLATE KINASE"/>
    <property type="match status" value="1"/>
</dbReference>
<dbReference type="PANTHER" id="PTHR10344:SF1">
    <property type="entry name" value="THYMIDYLATE KINASE"/>
    <property type="match status" value="1"/>
</dbReference>
<dbReference type="Pfam" id="PF02223">
    <property type="entry name" value="Thymidylate_kin"/>
    <property type="match status" value="1"/>
</dbReference>
<dbReference type="SUPFAM" id="SSF52540">
    <property type="entry name" value="P-loop containing nucleoside triphosphate hydrolases"/>
    <property type="match status" value="1"/>
</dbReference>
<dbReference type="PROSITE" id="PS01331">
    <property type="entry name" value="THYMIDYLATE_KINASE"/>
    <property type="match status" value="1"/>
</dbReference>
<feature type="chain" id="PRO_0000456766" description="Thymidylate kinase">
    <location>
        <begin position="1"/>
        <end position="210"/>
    </location>
</feature>
<feature type="region of interest" description="LID" evidence="11">
    <location>
        <begin position="143"/>
        <end position="155"/>
    </location>
</feature>
<feature type="binding site" evidence="3 16">
    <location>
        <position position="17"/>
    </location>
    <ligand>
        <name>dGMP</name>
        <dbReference type="ChEBI" id="CHEBI:57673"/>
    </ligand>
</feature>
<feature type="binding site" evidence="3 15">
    <location>
        <position position="17"/>
    </location>
    <ligand>
        <name>dTMP</name>
        <dbReference type="ChEBI" id="CHEBI:63528"/>
    </ligand>
</feature>
<feature type="binding site" evidence="11 15 16 18">
    <location>
        <position position="18"/>
    </location>
    <ligand>
        <name>ATP</name>
        <dbReference type="ChEBI" id="CHEBI:30616"/>
    </ligand>
</feature>
<feature type="binding site" evidence="11 15 16 18">
    <location>
        <position position="19"/>
    </location>
    <ligand>
        <name>ATP</name>
        <dbReference type="ChEBI" id="CHEBI:30616"/>
    </ligand>
</feature>
<feature type="binding site" evidence="11 15 16 18">
    <location>
        <position position="20"/>
    </location>
    <ligand>
        <name>ATP</name>
        <dbReference type="ChEBI" id="CHEBI:30616"/>
    </ligand>
</feature>
<feature type="binding site" evidence="11 15 16 18">
    <location>
        <position position="21"/>
    </location>
    <ligand>
        <name>ATP</name>
        <dbReference type="ChEBI" id="CHEBI:30616"/>
    </ligand>
</feature>
<feature type="binding site" evidence="11 15 16 18">
    <location>
        <position position="22"/>
    </location>
    <ligand>
        <name>ATP</name>
        <dbReference type="ChEBI" id="CHEBI:30616"/>
    </ligand>
</feature>
<feature type="binding site" evidence="11 15 16 18">
    <location>
        <position position="23"/>
    </location>
    <ligand>
        <name>ATP</name>
        <dbReference type="ChEBI" id="CHEBI:30616"/>
    </ligand>
</feature>
<feature type="binding site" evidence="3 15">
    <location>
        <position position="47"/>
    </location>
    <ligand>
        <name>dTMP</name>
        <dbReference type="ChEBI" id="CHEBI:63528"/>
    </ligand>
</feature>
<feature type="binding site" evidence="3 16">
    <location>
        <position position="74"/>
    </location>
    <ligand>
        <name>dGMP</name>
        <dbReference type="ChEBI" id="CHEBI:57673"/>
    </ligand>
</feature>
<feature type="binding site" evidence="3 15">
    <location>
        <position position="74"/>
    </location>
    <ligand>
        <name>dTMP</name>
        <dbReference type="ChEBI" id="CHEBI:63528"/>
    </ligand>
</feature>
<feature type="binding site" evidence="3 16">
    <location>
        <position position="78"/>
    </location>
    <ligand>
        <name>dGMP</name>
        <dbReference type="ChEBI" id="CHEBI:57673"/>
    </ligand>
</feature>
<feature type="binding site" evidence="3 15">
    <location>
        <position position="78"/>
    </location>
    <ligand>
        <name>dTMP</name>
        <dbReference type="ChEBI" id="CHEBI:63528"/>
    </ligand>
</feature>
<feature type="binding site" evidence="3 16">
    <location>
        <position position="99"/>
    </location>
    <ligand>
        <name>dGMP</name>
        <dbReference type="ChEBI" id="CHEBI:57673"/>
    </ligand>
</feature>
<feature type="binding site" evidence="3 15">
    <location>
        <position position="99"/>
    </location>
    <ligand>
        <name>dTMP</name>
        <dbReference type="ChEBI" id="CHEBI:63528"/>
    </ligand>
</feature>
<feature type="binding site" evidence="3 16">
    <location>
        <position position="107"/>
    </location>
    <ligand>
        <name>dGMP</name>
        <dbReference type="ChEBI" id="CHEBI:57673"/>
    </ligand>
</feature>
<feature type="binding site" evidence="3 15">
    <location>
        <position position="107"/>
    </location>
    <ligand>
        <name>dTMP</name>
        <dbReference type="ChEBI" id="CHEBI:63528"/>
    </ligand>
</feature>
<feature type="binding site" evidence="3 4 16">
    <location>
        <position position="108"/>
    </location>
    <ligand>
        <name>dGMP</name>
        <dbReference type="ChEBI" id="CHEBI:57673"/>
    </ligand>
</feature>
<feature type="binding site" evidence="3 4 16">
    <location>
        <position position="153"/>
    </location>
    <ligand>
        <name>dGMP</name>
        <dbReference type="ChEBI" id="CHEBI:57673"/>
    </ligand>
</feature>
<feature type="binding site" evidence="11 15 16 18">
    <location>
        <position position="182"/>
    </location>
    <ligand>
        <name>ATP</name>
        <dbReference type="ChEBI" id="CHEBI:30616"/>
    </ligand>
</feature>
<feature type="mutagenesis site" description="No defect in catalytic activity." evidence="2">
    <original>Y</original>
    <variation>R</variation>
    <variation>L</variation>
    <location>
        <position position="43"/>
    </location>
</feature>
<feature type="mutagenesis site" description="Loss of thymidylate and guanylate kinase activities." evidence="2">
    <original>F</original>
    <variation>A</variation>
    <location>
        <position position="74"/>
    </location>
</feature>
<feature type="mutagenesis site" description="4 to 5-fold decrease in affinity for dTMP and dGMP. 6-fold decrease in catalytic efficiency with dTMP as substrate. 65-fold decrease in catalytic efficiency with dGMP as substrate." evidence="2">
    <original>Y</original>
    <variation>F</variation>
    <location>
        <position position="107"/>
    </location>
</feature>
<feature type="mutagenesis site" description="No defect in thymidylate kinase activity. 1.3-fold reduction in affinity for dGMP." evidence="4">
    <original>S</original>
    <variation>A</variation>
    <location>
        <position position="108"/>
    </location>
</feature>
<feature type="mutagenesis site" description="No defect in thymidylate kinase activity. 2.1-fold reduction in affinity for dGMP." evidence="2 4">
    <original>S</original>
    <variation>T</variation>
    <location>
        <position position="108"/>
    </location>
</feature>
<feature type="mutagenesis site" description="8-fold decrease in affinity for dTMP. 4-fold decrease in affinity for dGMP. 439-fold decrease in catalytic efficiency with dGMP as substrate.2000-fold decrease in catalytic efficiency with dGMP as substrate." evidence="2">
    <original>A</original>
    <variation>K</variation>
    <location>
        <position position="111"/>
    </location>
</feature>
<feature type="mutagenesis site" description="2.5-fold reduction in affinity for dTMP. 2.6-fold reduction in affinity for dGMP." evidence="4">
    <original>Y</original>
    <variation>F</variation>
    <location>
        <position position="153"/>
    </location>
</feature>
<feature type="strand" evidence="23">
    <location>
        <begin position="10"/>
        <end position="15"/>
    </location>
</feature>
<feature type="helix" evidence="23">
    <location>
        <begin position="21"/>
        <end position="34"/>
    </location>
</feature>
<feature type="strand" evidence="23">
    <location>
        <begin position="39"/>
        <end position="45"/>
    </location>
</feature>
<feature type="helix" evidence="23">
    <location>
        <begin position="50"/>
        <end position="59"/>
    </location>
</feature>
<feature type="helix" evidence="23">
    <location>
        <begin position="67"/>
        <end position="79"/>
    </location>
</feature>
<feature type="helix" evidence="23">
    <location>
        <begin position="82"/>
        <end position="91"/>
    </location>
</feature>
<feature type="strand" evidence="23">
    <location>
        <begin position="94"/>
        <end position="98"/>
    </location>
</feature>
<feature type="helix" evidence="23">
    <location>
        <begin position="101"/>
        <end position="111"/>
    </location>
</feature>
<feature type="helix" evidence="23">
    <location>
        <begin position="116"/>
        <end position="120"/>
    </location>
</feature>
<feature type="helix" evidence="23">
    <location>
        <begin position="121"/>
        <end position="123"/>
    </location>
</feature>
<feature type="strand" evidence="23">
    <location>
        <begin position="130"/>
        <end position="136"/>
    </location>
</feature>
<feature type="helix" evidence="22">
    <location>
        <begin position="141"/>
        <end position="144"/>
    </location>
</feature>
<feature type="turn" evidence="22">
    <location>
        <begin position="146"/>
        <end position="149"/>
    </location>
</feature>
<feature type="helix" evidence="23">
    <location>
        <begin position="156"/>
        <end position="166"/>
    </location>
</feature>
<feature type="helix" evidence="23">
    <location>
        <begin position="167"/>
        <end position="169"/>
    </location>
</feature>
<feature type="strand" evidence="23">
    <location>
        <begin position="175"/>
        <end position="179"/>
    </location>
</feature>
<feature type="helix" evidence="23">
    <location>
        <begin position="184"/>
        <end position="196"/>
    </location>
</feature>
<protein>
    <recommendedName>
        <fullName evidence="5">Thymidylate kinase</fullName>
        <shortName evidence="5">PfTMK</shortName>
        <shortName evidence="7">PfTMPK</shortName>
        <ecNumber evidence="1 2 3 4">2.7.4.8</ecNumber>
        <ecNumber evidence="1 2 3 4">2.7.4.9</ecNumber>
    </recommendedName>
    <alternativeName>
        <fullName evidence="5">Thymidine monophosphate kinase</fullName>
    </alternativeName>
    <alternativeName>
        <fullName evidence="6">Thymidylate/guanylate kinase</fullName>
    </alternativeName>
</protein>
<organism evidence="14">
    <name type="scientific">Plasmodium falciparum (isolate 3D7)</name>
    <dbReference type="NCBI Taxonomy" id="36329"/>
    <lineage>
        <taxon>Eukaryota</taxon>
        <taxon>Sar</taxon>
        <taxon>Alveolata</taxon>
        <taxon>Apicomplexa</taxon>
        <taxon>Aconoidasida</taxon>
        <taxon>Haemosporida</taxon>
        <taxon>Plasmodiidae</taxon>
        <taxon>Plasmodium</taxon>
        <taxon>Plasmodium (Laverania)</taxon>
    </lineage>
</organism>
<reference evidence="14" key="1">
    <citation type="journal article" date="2002" name="Nature">
        <title>Genome sequence of the human malaria parasite Plasmodium falciparum.</title>
        <authorList>
            <person name="Gardner M.J."/>
            <person name="Hall N."/>
            <person name="Fung E."/>
            <person name="White O."/>
            <person name="Berriman M."/>
            <person name="Hyman R.W."/>
            <person name="Carlton J.M."/>
            <person name="Pain A."/>
            <person name="Nelson K.E."/>
            <person name="Bowman S."/>
            <person name="Paulsen I.T."/>
            <person name="James K.D."/>
            <person name="Eisen J.A."/>
            <person name="Rutherford K.M."/>
            <person name="Salzberg S.L."/>
            <person name="Craig A."/>
            <person name="Kyes S."/>
            <person name="Chan M.-S."/>
            <person name="Nene V."/>
            <person name="Shallom S.J."/>
            <person name="Suh B."/>
            <person name="Peterson J."/>
            <person name="Angiuoli S."/>
            <person name="Pertea M."/>
            <person name="Allen J."/>
            <person name="Selengut J."/>
            <person name="Haft D."/>
            <person name="Mather M.W."/>
            <person name="Vaidya A.B."/>
            <person name="Martin D.M.A."/>
            <person name="Fairlamb A.H."/>
            <person name="Fraunholz M.J."/>
            <person name="Roos D.S."/>
            <person name="Ralph S.A."/>
            <person name="McFadden G.I."/>
            <person name="Cummings L.M."/>
            <person name="Subramanian G.M."/>
            <person name="Mungall C."/>
            <person name="Venter J.C."/>
            <person name="Carucci D.J."/>
            <person name="Hoffman S.L."/>
            <person name="Newbold C."/>
            <person name="Davis R.W."/>
            <person name="Fraser C.M."/>
            <person name="Barrell B.G."/>
        </authorList>
    </citation>
    <scope>NUCLEOTIDE SEQUENCE [LARGE SCALE GENOMIC DNA]</scope>
    <source>
        <strain evidence="14">3D7</strain>
    </source>
</reference>
<reference evidence="8" key="2">
    <citation type="journal article" date="2008" name="J. Biochem.">
        <title>Molecular characterization, heterologous expression and kinetic analysis of recombinant Plasmodium falciparum thymidylate kinase.</title>
        <authorList>
            <person name="Kandeel M."/>
            <person name="Kitade Y."/>
        </authorList>
    </citation>
    <scope>FUNCTION</scope>
    <scope>CATALYTIC ACTIVITY</scope>
    <scope>BIOPHYSICOCHEMICAL PROPERTIES</scope>
    <scope>PATHWAY</scope>
    <scope>SUBUNIT</scope>
    <source>
        <strain evidence="1">FCR-3</strain>
    </source>
</reference>
<reference evidence="8" key="3">
    <citation type="journal article" date="2009" name="Parasitology">
        <title>Mutational, inhibitory and microcalorimetric analyses of Plasmodium falciparum TMP kinase. Implications for drug discovery.</title>
        <authorList>
            <person name="Kandeel M."/>
            <person name="Ando T."/>
            <person name="Kitamura Y."/>
            <person name="Abdel-Aziz M."/>
            <person name="Kitade Y."/>
        </authorList>
    </citation>
    <scope>FUNCTION</scope>
    <scope>CATALYTIC ACTIVITY</scope>
    <scope>ACTIVITY REGULATION</scope>
    <scope>BIOPHYSICOCHEMICAL PROPERTIES</scope>
    <scope>PATHWAY</scope>
    <scope>SUBUNIT</scope>
    <scope>MUTAGENESIS OF TYR-43; PHE-74; TYR-107; SER-108 AND ALA-111</scope>
</reference>
<reference evidence="8" key="4">
    <citation type="journal article" date="2020" name="Biochemistry">
        <title>dGMP Binding to Thymidylate Kinase from Plasmodium falciparum Shows Half-Site Binding and Induces Protein Dynamics at the Dimer Interface.</title>
        <authorList>
            <person name="Chen M.D."/>
            <person name="Fucci I.J."/>
            <person name="Sinha K."/>
            <person name="Rule G.S."/>
        </authorList>
    </citation>
    <scope>FUNCTION</scope>
    <scope>CATALYTIC ACTIVITY</scope>
    <scope>BIOPHYSICOCHEMICAL PROPERTIES</scope>
    <scope>PATHWAY</scope>
    <scope>SUBUNIT</scope>
    <scope>MUTAGENESIS OF SER-108 AND TYR-153</scope>
</reference>
<reference evidence="15 16 17 18" key="5">
    <citation type="journal article" date="2010" name="Biochem. J.">
        <title>Structural basis for the efficient phosphorylation of AZT-MP (3'-azido-3'-deoxythymidine monophosphate) and dGMP by Plasmodium falciparum type I thymidylate kinase.</title>
        <authorList>
            <person name="Whittingham J.L."/>
            <person name="Carrero-Lerida J."/>
            <person name="Brannigan J.A."/>
            <person name="Ruiz-Perez L.M."/>
            <person name="Silva A.P."/>
            <person name="Fogg M.J."/>
            <person name="Wilkinson A.J."/>
            <person name="Gilbert I.H."/>
            <person name="Wilson K.S."/>
            <person name="Gonzalez-Pacanowska D."/>
        </authorList>
    </citation>
    <scope>X-RAY CRYSTALLOGRAPHY (1.89 ANGSTROMS) IN COMPLEX WITH DGMP-ADP; DTMP-ADP AND INHIBITOR</scope>
    <scope>FUNCTION</scope>
    <scope>CATALYTIC ACTIVITY</scope>
    <scope>BIOPHYSICOCHEMICAL PROPERTIES</scope>
    <scope>PATHWAY</scope>
    <scope>BIOTECHNOLOGY</scope>
</reference>
<reference evidence="19 20 21" key="6">
    <citation type="journal article" date="2012" name="J. Med. Chem.">
        <title>Synthesis and evaluation of alpha-thymidine analogues as novel antimalarials.</title>
        <authorList>
            <person name="Cui H."/>
            <person name="Carrero-Lerida J."/>
            <person name="Silva A.P."/>
            <person name="Whittingham J.L."/>
            <person name="Brannigan J.A."/>
            <person name="Ruiz-Perez L.M."/>
            <person name="Read K.D."/>
            <person name="Wilson K.S."/>
            <person name="Gonzalez-Pacanowska D."/>
            <person name="Gilbert I.H."/>
        </authorList>
    </citation>
    <scope>X-RAY CRYSTALLOGRAPHY (1.50 ANGSTROMS) IN COMPLEX WITH INHIBITORS</scope>
</reference>